<feature type="chain" id="PRO_0000237276" description="Large ribosomal subunit protein uL2cz/uL2cy">
    <location>
        <begin position="1"/>
        <end position="274"/>
    </location>
</feature>
<feature type="region of interest" description="Disordered" evidence="3">
    <location>
        <begin position="1"/>
        <end position="21"/>
    </location>
</feature>
<feature type="region of interest" description="Disordered" evidence="3">
    <location>
        <begin position="224"/>
        <end position="274"/>
    </location>
</feature>
<comment type="subunit">
    <text evidence="1">Part of the 50S ribosomal subunit.</text>
</comment>
<comment type="subcellular location">
    <subcellularLocation>
        <location>Plastid</location>
        <location>Chloroplast</location>
    </subcellularLocation>
</comment>
<comment type="similarity">
    <text evidence="4">Belongs to the universal ribosomal protein uL2 family.</text>
</comment>
<protein>
    <recommendedName>
        <fullName evidence="2">Large ribosomal subunit protein uL2cz/uL2cy</fullName>
    </recommendedName>
    <alternativeName>
        <fullName evidence="4">50S ribosomal protein L2, chloroplastic</fullName>
    </alternativeName>
</protein>
<proteinExistence type="inferred from homology"/>
<accession>Q2L944</accession>
<dbReference type="EMBL" id="DQ345959">
    <property type="protein sequence ID" value="ABC73667.1"/>
    <property type="molecule type" value="Genomic_DNA"/>
</dbReference>
<dbReference type="EMBL" id="DQ345959">
    <property type="protein sequence ID" value="ABC73692.1"/>
    <property type="molecule type" value="Genomic_DNA"/>
</dbReference>
<dbReference type="RefSeq" id="XP_016719335.1">
    <property type="nucleotide sequence ID" value="XM_016863846.1"/>
</dbReference>
<dbReference type="RefSeq" id="XP_016719355.1">
    <property type="nucleotide sequence ID" value="XM_016863866.1"/>
</dbReference>
<dbReference type="RefSeq" id="XP_016719356.1">
    <property type="nucleotide sequence ID" value="XM_016863867.1"/>
</dbReference>
<dbReference type="SMR" id="Q2L944"/>
<dbReference type="KEGG" id="ghi:3989144"/>
<dbReference type="KEGG" id="ghi:3989225"/>
<dbReference type="OrthoDB" id="31995at41938"/>
<dbReference type="Proteomes" id="UP000189702">
    <property type="component" value="Unplaced"/>
</dbReference>
<dbReference type="GO" id="GO:0009507">
    <property type="term" value="C:chloroplast"/>
    <property type="evidence" value="ECO:0007669"/>
    <property type="project" value="UniProtKB-SubCell"/>
</dbReference>
<dbReference type="GO" id="GO:0005762">
    <property type="term" value="C:mitochondrial large ribosomal subunit"/>
    <property type="evidence" value="ECO:0000318"/>
    <property type="project" value="GO_Central"/>
</dbReference>
<dbReference type="GO" id="GO:0003723">
    <property type="term" value="F:RNA binding"/>
    <property type="evidence" value="ECO:0000318"/>
    <property type="project" value="GO_Central"/>
</dbReference>
<dbReference type="GO" id="GO:0019843">
    <property type="term" value="F:rRNA binding"/>
    <property type="evidence" value="ECO:0007669"/>
    <property type="project" value="UniProtKB-UniRule"/>
</dbReference>
<dbReference type="GO" id="GO:0003735">
    <property type="term" value="F:structural constituent of ribosome"/>
    <property type="evidence" value="ECO:0000318"/>
    <property type="project" value="GO_Central"/>
</dbReference>
<dbReference type="GO" id="GO:0016740">
    <property type="term" value="F:transferase activity"/>
    <property type="evidence" value="ECO:0007669"/>
    <property type="project" value="InterPro"/>
</dbReference>
<dbReference type="GO" id="GO:0032543">
    <property type="term" value="P:mitochondrial translation"/>
    <property type="evidence" value="ECO:0000318"/>
    <property type="project" value="GO_Central"/>
</dbReference>
<dbReference type="FunFam" id="4.10.950.10:FF:000001">
    <property type="entry name" value="50S ribosomal protein L2"/>
    <property type="match status" value="1"/>
</dbReference>
<dbReference type="FunFam" id="2.30.30.30:FF:000008">
    <property type="entry name" value="50S ribosomal protein L2, chloroplastic"/>
    <property type="match status" value="1"/>
</dbReference>
<dbReference type="FunFam" id="2.40.50.140:FF:000029">
    <property type="entry name" value="50S ribosomal protein L2, chloroplastic"/>
    <property type="match status" value="1"/>
</dbReference>
<dbReference type="Gene3D" id="2.30.30.30">
    <property type="match status" value="1"/>
</dbReference>
<dbReference type="Gene3D" id="2.40.50.140">
    <property type="entry name" value="Nucleic acid-binding proteins"/>
    <property type="match status" value="1"/>
</dbReference>
<dbReference type="Gene3D" id="4.10.950.10">
    <property type="entry name" value="Ribosomal protein L2, domain 3"/>
    <property type="match status" value="1"/>
</dbReference>
<dbReference type="HAMAP" id="MF_01320_B">
    <property type="entry name" value="Ribosomal_uL2_B"/>
    <property type="match status" value="1"/>
</dbReference>
<dbReference type="InterPro" id="IPR012340">
    <property type="entry name" value="NA-bd_OB-fold"/>
</dbReference>
<dbReference type="InterPro" id="IPR014722">
    <property type="entry name" value="Rib_uL2_dom2"/>
</dbReference>
<dbReference type="InterPro" id="IPR002171">
    <property type="entry name" value="Ribosomal_uL2"/>
</dbReference>
<dbReference type="InterPro" id="IPR005880">
    <property type="entry name" value="Ribosomal_uL2_bac/org-type"/>
</dbReference>
<dbReference type="InterPro" id="IPR022669">
    <property type="entry name" value="Ribosomal_uL2_C"/>
</dbReference>
<dbReference type="InterPro" id="IPR022671">
    <property type="entry name" value="Ribosomal_uL2_CS"/>
</dbReference>
<dbReference type="InterPro" id="IPR014726">
    <property type="entry name" value="Ribosomal_uL2_dom3"/>
</dbReference>
<dbReference type="InterPro" id="IPR022666">
    <property type="entry name" value="Ribosomal_uL2_RNA-bd_dom"/>
</dbReference>
<dbReference type="InterPro" id="IPR008991">
    <property type="entry name" value="Translation_prot_SH3-like_sf"/>
</dbReference>
<dbReference type="NCBIfam" id="TIGR01171">
    <property type="entry name" value="rplB_bact"/>
    <property type="match status" value="1"/>
</dbReference>
<dbReference type="PANTHER" id="PTHR13691:SF5">
    <property type="entry name" value="LARGE RIBOSOMAL SUBUNIT PROTEIN UL2M"/>
    <property type="match status" value="1"/>
</dbReference>
<dbReference type="PANTHER" id="PTHR13691">
    <property type="entry name" value="RIBOSOMAL PROTEIN L2"/>
    <property type="match status" value="1"/>
</dbReference>
<dbReference type="Pfam" id="PF00181">
    <property type="entry name" value="Ribosomal_L2"/>
    <property type="match status" value="1"/>
</dbReference>
<dbReference type="Pfam" id="PF03947">
    <property type="entry name" value="Ribosomal_L2_C"/>
    <property type="match status" value="1"/>
</dbReference>
<dbReference type="PIRSF" id="PIRSF002158">
    <property type="entry name" value="Ribosomal_L2"/>
    <property type="match status" value="1"/>
</dbReference>
<dbReference type="SMART" id="SM01383">
    <property type="entry name" value="Ribosomal_L2"/>
    <property type="match status" value="1"/>
</dbReference>
<dbReference type="SMART" id="SM01382">
    <property type="entry name" value="Ribosomal_L2_C"/>
    <property type="match status" value="1"/>
</dbReference>
<dbReference type="SUPFAM" id="SSF50249">
    <property type="entry name" value="Nucleic acid-binding proteins"/>
    <property type="match status" value="1"/>
</dbReference>
<dbReference type="SUPFAM" id="SSF50104">
    <property type="entry name" value="Translation proteins SH3-like domain"/>
    <property type="match status" value="1"/>
</dbReference>
<dbReference type="PROSITE" id="PS00467">
    <property type="entry name" value="RIBOSOMAL_L2"/>
    <property type="match status" value="1"/>
</dbReference>
<sequence length="274" mass="29915">MAIHLYKTSTPGTRNGAVDSQVKSNPRNNLIYGQHRCGKGRNARGIITARHRGGGHKRLYRKIDFRRNEKDIYGRIVTIEYDPNRNAYICLIHYGDGEKRYILHPRGAIIGDTIVSGTEVPIKMGNALPLTDMPLGTAIHNIEITLGRGGQLARAAGAVAKLIAKEGKSATLKLPSGEVRLISKNCSATVGQVGNVGVNQKSLGRAGSKCWLGKRPVVRGVVMNPVDHPHGGGEGRAPIGRKKPATPWGYPALGRRSRKRNKYSDNLILRRRSK</sequence>
<geneLocation type="chloroplast"/>
<evidence type="ECO:0000250" key="1"/>
<evidence type="ECO:0000255" key="2">
    <source>
        <dbReference type="HAMAP-Rule" id="MF_01320"/>
    </source>
</evidence>
<evidence type="ECO:0000256" key="3">
    <source>
        <dbReference type="SAM" id="MobiDB-lite"/>
    </source>
</evidence>
<evidence type="ECO:0000305" key="4"/>
<organism>
    <name type="scientific">Gossypium hirsutum</name>
    <name type="common">Upland cotton</name>
    <name type="synonym">Gossypium mexicanum</name>
    <dbReference type="NCBI Taxonomy" id="3635"/>
    <lineage>
        <taxon>Eukaryota</taxon>
        <taxon>Viridiplantae</taxon>
        <taxon>Streptophyta</taxon>
        <taxon>Embryophyta</taxon>
        <taxon>Tracheophyta</taxon>
        <taxon>Spermatophyta</taxon>
        <taxon>Magnoliopsida</taxon>
        <taxon>eudicotyledons</taxon>
        <taxon>Gunneridae</taxon>
        <taxon>Pentapetalae</taxon>
        <taxon>rosids</taxon>
        <taxon>malvids</taxon>
        <taxon>Malvales</taxon>
        <taxon>Malvaceae</taxon>
        <taxon>Malvoideae</taxon>
        <taxon>Gossypium</taxon>
    </lineage>
</organism>
<reference key="1">
    <citation type="journal article" date="2006" name="BMC Genomics">
        <title>The complete chloroplast genome sequence of Gossypium hirsutum: organization and phylogenetic relationships to other angiosperms.</title>
        <authorList>
            <person name="Lee S.-B."/>
            <person name="Kaittanis C."/>
            <person name="Jansen R.K."/>
            <person name="Hostetler J.B."/>
            <person name="Tallon L.J."/>
            <person name="Town C.D."/>
            <person name="Daniell H."/>
        </authorList>
    </citation>
    <scope>NUCLEOTIDE SEQUENCE [LARGE SCALE GENOMIC DNA]</scope>
    <source>
        <strain>cv. Coker 310FR</strain>
    </source>
</reference>
<keyword id="KW-0150">Chloroplast</keyword>
<keyword id="KW-0934">Plastid</keyword>
<keyword id="KW-1185">Reference proteome</keyword>
<keyword id="KW-0687">Ribonucleoprotein</keyword>
<keyword id="KW-0689">Ribosomal protein</keyword>
<name>RK2_GOSHI</name>
<gene>
    <name type="primary">rpl2-A</name>
</gene>
<gene>
    <name type="primary">rpl2-B</name>
</gene>